<comment type="function">
    <text evidence="2">Insulator DNA-binding protein (PubMed:25342723). Recruits Cp190 and cooperatively binds to chromatin promoter regions to exert transcriptional regulator and chromatin insulator functions (PubMed:25342723). Chromatin insulators are regulatory elements that establish independent domains of transcriptional activity within eukaryotic genomes. Insulators are proposed to structure the chromatin fiber into independent domains of differing transcriptional potential by promoting the formation of distinct chromatin loops to form topologically associating domains (TADs). Chromatin binding sites often cluster with those of other insulator DNA-binding proteins such as pita, CTCF and BEAF-32, but not Su(Hw) (PubMed:25342723).</text>
</comment>
<comment type="subunit">
    <text evidence="2">Interacts (via region between the ZAD domain and the first zinc finger domain) with Cp190 (via centrosomal targeting M domain); the interaction is direct (PubMed:25342723). Interacts with pita (PubMed:25342723).</text>
</comment>
<comment type="interaction">
    <interactant intactId="EBI-135464">
        <id>Q9VAB8</id>
    </interactant>
    <interactant intactId="EBI-135464">
        <id>Q9VAB8</id>
        <label>ZIPIC</label>
    </interactant>
    <organismsDiffer>false</organismsDiffer>
    <experiments>3</experiments>
</comment>
<comment type="subcellular location">
    <subcellularLocation>
        <location evidence="2">Nucleus</location>
    </subcellularLocation>
    <subcellularLocation>
        <location evidence="2">Chromosome</location>
    </subcellularLocation>
    <text evidence="2">On polytene chromosomes of third-instar larvae colocalizes with Cp190.</text>
</comment>
<comment type="developmental stage">
    <text evidence="2">Expressed in 0-12 hour old embryos and 3rd instar larvae (at protein level).</text>
</comment>
<proteinExistence type="evidence at protein level"/>
<gene>
    <name evidence="6" type="primary">ZIPIC</name>
    <name evidence="6" type="ORF">CG7928</name>
</gene>
<sequence length="457" mass="53091">MNCCICQFSVRVPKDIHTDTVGHPPVLISELVLQCTRGTNYVLTEESSTICKKCCEKLARYHKSIQIARKLRGEILELIHSPYMSKDHKQTSYKEDDLDRETTISKFDGNIEEAQQQDEEEQELESVGTTVTLVGPAGIVEEVAEEEHTFIIKQSEEEDEFHSVDLELDIDNEIIINEEEAHEVEEVAHEIEEVAHEIEEEDLLPHDKQEAQEEDFFKEDTMSDFDEHLDGAIEYIISDGEDQEQDNESSGEYTVNIQCPSCPEKFSSRRAYNVHTKREHFPGYVCDQCGKTLQSYSGFIGHLQNHEPVKQFACPVCPERFSRKFRLKHHMAWHSGETPYQCDVCSKRFVHKVALYKHKMIHDSETKRLECQVCGFKTRTKAHLERHMRSHTGDKPFACPVCNKRFSQMYNMKAHLREHESPGTNRHRRFHCSKCTHTFINEQNYDAHVQRDDCTPV</sequence>
<accession>Q9VAB8</accession>
<name>ZIPIC_DROME</name>
<organism evidence="7">
    <name type="scientific">Drosophila melanogaster</name>
    <name type="common">Fruit fly</name>
    <dbReference type="NCBI Taxonomy" id="7227"/>
    <lineage>
        <taxon>Eukaryota</taxon>
        <taxon>Metazoa</taxon>
        <taxon>Ecdysozoa</taxon>
        <taxon>Arthropoda</taxon>
        <taxon>Hexapoda</taxon>
        <taxon>Insecta</taxon>
        <taxon>Pterygota</taxon>
        <taxon>Neoptera</taxon>
        <taxon>Endopterygota</taxon>
        <taxon>Diptera</taxon>
        <taxon>Brachycera</taxon>
        <taxon>Muscomorpha</taxon>
        <taxon>Ephydroidea</taxon>
        <taxon>Drosophilidae</taxon>
        <taxon>Drosophila</taxon>
        <taxon>Sophophora</taxon>
    </lineage>
</organism>
<evidence type="ECO:0000255" key="1">
    <source>
        <dbReference type="PROSITE-ProRule" id="PRU00042"/>
    </source>
</evidence>
<evidence type="ECO:0000269" key="2">
    <source>
    </source>
</evidence>
<evidence type="ECO:0000303" key="3">
    <source>
    </source>
</evidence>
<evidence type="ECO:0000305" key="4"/>
<evidence type="ECO:0000312" key="5">
    <source>
        <dbReference type="EMBL" id="AAL28743.1"/>
    </source>
</evidence>
<evidence type="ECO:0000312" key="6">
    <source>
        <dbReference type="FlyBase" id="FBgn0039740"/>
    </source>
</evidence>
<evidence type="ECO:0000312" key="7">
    <source>
        <dbReference type="Proteomes" id="UP000000803"/>
    </source>
</evidence>
<reference evidence="7" key="1">
    <citation type="journal article" date="2000" name="Science">
        <title>The genome sequence of Drosophila melanogaster.</title>
        <authorList>
            <person name="Adams M.D."/>
            <person name="Celniker S.E."/>
            <person name="Holt R.A."/>
            <person name="Evans C.A."/>
            <person name="Gocayne J.D."/>
            <person name="Amanatides P.G."/>
            <person name="Scherer S.E."/>
            <person name="Li P.W."/>
            <person name="Hoskins R.A."/>
            <person name="Galle R.F."/>
            <person name="George R.A."/>
            <person name="Lewis S.E."/>
            <person name="Richards S."/>
            <person name="Ashburner M."/>
            <person name="Henderson S.N."/>
            <person name="Sutton G.G."/>
            <person name="Wortman J.R."/>
            <person name="Yandell M.D."/>
            <person name="Zhang Q."/>
            <person name="Chen L.X."/>
            <person name="Brandon R.C."/>
            <person name="Rogers Y.-H.C."/>
            <person name="Blazej R.G."/>
            <person name="Champe M."/>
            <person name="Pfeiffer B.D."/>
            <person name="Wan K.H."/>
            <person name="Doyle C."/>
            <person name="Baxter E.G."/>
            <person name="Helt G."/>
            <person name="Nelson C.R."/>
            <person name="Miklos G.L.G."/>
            <person name="Abril J.F."/>
            <person name="Agbayani A."/>
            <person name="An H.-J."/>
            <person name="Andrews-Pfannkoch C."/>
            <person name="Baldwin D."/>
            <person name="Ballew R.M."/>
            <person name="Basu A."/>
            <person name="Baxendale J."/>
            <person name="Bayraktaroglu L."/>
            <person name="Beasley E.M."/>
            <person name="Beeson K.Y."/>
            <person name="Benos P.V."/>
            <person name="Berman B.P."/>
            <person name="Bhandari D."/>
            <person name="Bolshakov S."/>
            <person name="Borkova D."/>
            <person name="Botchan M.R."/>
            <person name="Bouck J."/>
            <person name="Brokstein P."/>
            <person name="Brottier P."/>
            <person name="Burtis K.C."/>
            <person name="Busam D.A."/>
            <person name="Butler H."/>
            <person name="Cadieu E."/>
            <person name="Center A."/>
            <person name="Chandra I."/>
            <person name="Cherry J.M."/>
            <person name="Cawley S."/>
            <person name="Dahlke C."/>
            <person name="Davenport L.B."/>
            <person name="Davies P."/>
            <person name="de Pablos B."/>
            <person name="Delcher A."/>
            <person name="Deng Z."/>
            <person name="Mays A.D."/>
            <person name="Dew I."/>
            <person name="Dietz S.M."/>
            <person name="Dodson K."/>
            <person name="Doup L.E."/>
            <person name="Downes M."/>
            <person name="Dugan-Rocha S."/>
            <person name="Dunkov B.C."/>
            <person name="Dunn P."/>
            <person name="Durbin K.J."/>
            <person name="Evangelista C.C."/>
            <person name="Ferraz C."/>
            <person name="Ferriera S."/>
            <person name="Fleischmann W."/>
            <person name="Fosler C."/>
            <person name="Gabrielian A.E."/>
            <person name="Garg N.S."/>
            <person name="Gelbart W.M."/>
            <person name="Glasser K."/>
            <person name="Glodek A."/>
            <person name="Gong F."/>
            <person name="Gorrell J.H."/>
            <person name="Gu Z."/>
            <person name="Guan P."/>
            <person name="Harris M."/>
            <person name="Harris N.L."/>
            <person name="Harvey D.A."/>
            <person name="Heiman T.J."/>
            <person name="Hernandez J.R."/>
            <person name="Houck J."/>
            <person name="Hostin D."/>
            <person name="Houston K.A."/>
            <person name="Howland T.J."/>
            <person name="Wei M.-H."/>
            <person name="Ibegwam C."/>
            <person name="Jalali M."/>
            <person name="Kalush F."/>
            <person name="Karpen G.H."/>
            <person name="Ke Z."/>
            <person name="Kennison J.A."/>
            <person name="Ketchum K.A."/>
            <person name="Kimmel B.E."/>
            <person name="Kodira C.D."/>
            <person name="Kraft C.L."/>
            <person name="Kravitz S."/>
            <person name="Kulp D."/>
            <person name="Lai Z."/>
            <person name="Lasko P."/>
            <person name="Lei Y."/>
            <person name="Levitsky A.A."/>
            <person name="Li J.H."/>
            <person name="Li Z."/>
            <person name="Liang Y."/>
            <person name="Lin X."/>
            <person name="Liu X."/>
            <person name="Mattei B."/>
            <person name="McIntosh T.C."/>
            <person name="McLeod M.P."/>
            <person name="McPherson D."/>
            <person name="Merkulov G."/>
            <person name="Milshina N.V."/>
            <person name="Mobarry C."/>
            <person name="Morris J."/>
            <person name="Moshrefi A."/>
            <person name="Mount S.M."/>
            <person name="Moy M."/>
            <person name="Murphy B."/>
            <person name="Murphy L."/>
            <person name="Muzny D.M."/>
            <person name="Nelson D.L."/>
            <person name="Nelson D.R."/>
            <person name="Nelson K.A."/>
            <person name="Nixon K."/>
            <person name="Nusskern D.R."/>
            <person name="Pacleb J.M."/>
            <person name="Palazzolo M."/>
            <person name="Pittman G.S."/>
            <person name="Pan S."/>
            <person name="Pollard J."/>
            <person name="Puri V."/>
            <person name="Reese M.G."/>
            <person name="Reinert K."/>
            <person name="Remington K."/>
            <person name="Saunders R.D.C."/>
            <person name="Scheeler F."/>
            <person name="Shen H."/>
            <person name="Shue B.C."/>
            <person name="Siden-Kiamos I."/>
            <person name="Simpson M."/>
            <person name="Skupski M.P."/>
            <person name="Smith T.J."/>
            <person name="Spier E."/>
            <person name="Spradling A.C."/>
            <person name="Stapleton M."/>
            <person name="Strong R."/>
            <person name="Sun E."/>
            <person name="Svirskas R."/>
            <person name="Tector C."/>
            <person name="Turner R."/>
            <person name="Venter E."/>
            <person name="Wang A.H."/>
            <person name="Wang X."/>
            <person name="Wang Z.-Y."/>
            <person name="Wassarman D.A."/>
            <person name="Weinstock G.M."/>
            <person name="Weissenbach J."/>
            <person name="Williams S.M."/>
            <person name="Woodage T."/>
            <person name="Worley K.C."/>
            <person name="Wu D."/>
            <person name="Yang S."/>
            <person name="Yao Q.A."/>
            <person name="Ye J."/>
            <person name="Yeh R.-F."/>
            <person name="Zaveri J.S."/>
            <person name="Zhan M."/>
            <person name="Zhang G."/>
            <person name="Zhao Q."/>
            <person name="Zheng L."/>
            <person name="Zheng X.H."/>
            <person name="Zhong F.N."/>
            <person name="Zhong W."/>
            <person name="Zhou X."/>
            <person name="Zhu S.C."/>
            <person name="Zhu X."/>
            <person name="Smith H.O."/>
            <person name="Gibbs R.A."/>
            <person name="Myers E.W."/>
            <person name="Rubin G.M."/>
            <person name="Venter J.C."/>
        </authorList>
    </citation>
    <scope>NUCLEOTIDE SEQUENCE [LARGE SCALE GENOMIC DNA]</scope>
    <source>
        <strain evidence="7">Berkeley</strain>
    </source>
</reference>
<reference evidence="7" key="2">
    <citation type="journal article" date="2002" name="Genome Biol.">
        <title>Annotation of the Drosophila melanogaster euchromatic genome: a systematic review.</title>
        <authorList>
            <person name="Misra S."/>
            <person name="Crosby M.A."/>
            <person name="Mungall C.J."/>
            <person name="Matthews B.B."/>
            <person name="Campbell K.S."/>
            <person name="Hradecky P."/>
            <person name="Huang Y."/>
            <person name="Kaminker J.S."/>
            <person name="Millburn G.H."/>
            <person name="Prochnik S.E."/>
            <person name="Smith C.D."/>
            <person name="Tupy J.L."/>
            <person name="Whitfield E.J."/>
            <person name="Bayraktaroglu L."/>
            <person name="Berman B.P."/>
            <person name="Bettencourt B.R."/>
            <person name="Celniker S.E."/>
            <person name="de Grey A.D.N.J."/>
            <person name="Drysdale R.A."/>
            <person name="Harris N.L."/>
            <person name="Richter J."/>
            <person name="Russo S."/>
            <person name="Schroeder A.J."/>
            <person name="Shu S.Q."/>
            <person name="Stapleton M."/>
            <person name="Yamada C."/>
            <person name="Ashburner M."/>
            <person name="Gelbart W.M."/>
            <person name="Rubin G.M."/>
            <person name="Lewis S.E."/>
        </authorList>
    </citation>
    <scope>GENOME REANNOTATION</scope>
    <source>
        <strain evidence="7">Berkeley</strain>
    </source>
</reference>
<reference evidence="5" key="3">
    <citation type="journal article" date="2002" name="Genome Biol.">
        <title>A Drosophila full-length cDNA resource.</title>
        <authorList>
            <person name="Stapleton M."/>
            <person name="Carlson J.W."/>
            <person name="Brokstein P."/>
            <person name="Yu C."/>
            <person name="Champe M."/>
            <person name="George R.A."/>
            <person name="Guarin H."/>
            <person name="Kronmiller B."/>
            <person name="Pacleb J.M."/>
            <person name="Park S."/>
            <person name="Wan K.H."/>
            <person name="Rubin G.M."/>
            <person name="Celniker S.E."/>
        </authorList>
    </citation>
    <scope>NUCLEOTIDE SEQUENCE [LARGE SCALE MRNA]</scope>
    <source>
        <strain evidence="5">Berkeley</strain>
        <tissue evidence="5">Embryo</tissue>
    </source>
</reference>
<reference evidence="4" key="4">
    <citation type="journal article" date="2015" name="Genome Res.">
        <title>Two new insulator proteins, Pita and ZIPIC, target CP190 to chromatin.</title>
        <authorList>
            <person name="Maksimenko O."/>
            <person name="Bartkuhn M."/>
            <person name="Stakhov V."/>
            <person name="Herold M."/>
            <person name="Zolotarev N."/>
            <person name="Jox T."/>
            <person name="Buxa M.K."/>
            <person name="Kirsch R."/>
            <person name="Bonchuk A."/>
            <person name="Fedotova A."/>
            <person name="Kyrchanova O."/>
            <person name="Renkawitz R."/>
            <person name="Georgiev P."/>
        </authorList>
    </citation>
    <scope>FUNCTION</scope>
    <scope>INTERACTION WITH CP190 AND PITA</scope>
    <scope>SUBCELLULAR LOCATION</scope>
    <scope>DEVELOPMENTAL STAGE</scope>
</reference>
<protein>
    <recommendedName>
        <fullName evidence="4">Zinc finger protein ZIPIC</fullName>
    </recommendedName>
    <alternativeName>
        <fullName evidence="3">Zinc-finger protein interacting with CP190</fullName>
    </alternativeName>
</protein>
<feature type="chain" id="PRO_0000459004" description="Zinc finger protein ZIPIC">
    <location>
        <begin position="1"/>
        <end position="457"/>
    </location>
</feature>
<feature type="domain" description="ZAD" evidence="3">
    <location>
        <begin position="3"/>
        <end position="84"/>
    </location>
</feature>
<feature type="zinc finger region" description="C2H2-type 1" evidence="1">
    <location>
        <begin position="257"/>
        <end position="280"/>
    </location>
</feature>
<feature type="zinc finger region" description="C2H2-type 2" evidence="1">
    <location>
        <begin position="284"/>
        <end position="306"/>
    </location>
</feature>
<feature type="zinc finger region" description="C2H2-type 3" evidence="1">
    <location>
        <begin position="312"/>
        <end position="334"/>
    </location>
</feature>
<feature type="zinc finger region" description="C2H2-type 4" evidence="1">
    <location>
        <begin position="340"/>
        <end position="362"/>
    </location>
</feature>
<feature type="zinc finger region" description="C2H2-type 5" evidence="1">
    <location>
        <begin position="369"/>
        <end position="391"/>
    </location>
</feature>
<feature type="zinc finger region" description="C2H2-type 6" evidence="1">
    <location>
        <begin position="397"/>
        <end position="419"/>
    </location>
</feature>
<feature type="zinc finger region" description="C2H2-type 7; degenerate" evidence="1">
    <location>
        <begin position="430"/>
        <end position="448"/>
    </location>
</feature>
<dbReference type="EMBL" id="AE014297">
    <property type="protein sequence ID" value="AAF56994.1"/>
    <property type="molecule type" value="Genomic_DNA"/>
</dbReference>
<dbReference type="EMBL" id="AY061195">
    <property type="protein sequence ID" value="AAL28743.1"/>
    <property type="molecule type" value="mRNA"/>
</dbReference>
<dbReference type="RefSeq" id="NP_651765.1">
    <property type="nucleotide sequence ID" value="NM_143508.2"/>
</dbReference>
<dbReference type="SMR" id="Q9VAB8"/>
<dbReference type="FunCoup" id="Q9VAB8">
    <property type="interactions" value="90"/>
</dbReference>
<dbReference type="IntAct" id="Q9VAB8">
    <property type="interactions" value="10"/>
</dbReference>
<dbReference type="STRING" id="7227.FBpp0084965"/>
<dbReference type="PaxDb" id="7227-FBpp0084965"/>
<dbReference type="DNASU" id="43566"/>
<dbReference type="EnsemblMetazoa" id="FBtr0085600">
    <property type="protein sequence ID" value="FBpp0084965"/>
    <property type="gene ID" value="FBgn0039740"/>
</dbReference>
<dbReference type="GeneID" id="43566"/>
<dbReference type="KEGG" id="dme:Dmel_CG7928"/>
<dbReference type="UCSC" id="CG7928-RA">
    <property type="organism name" value="d. melanogaster"/>
</dbReference>
<dbReference type="AGR" id="FB:FBgn0039740"/>
<dbReference type="CTD" id="43566"/>
<dbReference type="FlyBase" id="FBgn0039740">
    <property type="gene designation" value="ZIPIC"/>
</dbReference>
<dbReference type="VEuPathDB" id="VectorBase:FBgn0039740"/>
<dbReference type="eggNOG" id="KOG1721">
    <property type="taxonomic scope" value="Eukaryota"/>
</dbReference>
<dbReference type="GeneTree" id="ENSGT00940000166773"/>
<dbReference type="HOGENOM" id="CLU_608699_0_0_1"/>
<dbReference type="InParanoid" id="Q9VAB8"/>
<dbReference type="OMA" id="YHKSIQI"/>
<dbReference type="OrthoDB" id="6077919at2759"/>
<dbReference type="BioGRID-ORCS" id="43566">
    <property type="hits" value="0 hits in 1 CRISPR screen"/>
</dbReference>
<dbReference type="GenomeRNAi" id="43566"/>
<dbReference type="PRO" id="PR:Q9VAB8"/>
<dbReference type="Proteomes" id="UP000000803">
    <property type="component" value="Chromosome 3R"/>
</dbReference>
<dbReference type="Bgee" id="FBgn0039740">
    <property type="expression patterns" value="Expressed in oviduct (Drosophila) and 40 other cell types or tissues"/>
</dbReference>
<dbReference type="GO" id="GO:0005694">
    <property type="term" value="C:chromosome"/>
    <property type="evidence" value="ECO:0000318"/>
    <property type="project" value="GO_Central"/>
</dbReference>
<dbReference type="GO" id="GO:0005634">
    <property type="term" value="C:nucleus"/>
    <property type="evidence" value="ECO:0007669"/>
    <property type="project" value="UniProtKB-SubCell"/>
</dbReference>
<dbReference type="GO" id="GO:0005700">
    <property type="term" value="C:polytene chromosome"/>
    <property type="evidence" value="ECO:0000314"/>
    <property type="project" value="FlyBase"/>
</dbReference>
<dbReference type="GO" id="GO:0003682">
    <property type="term" value="F:chromatin binding"/>
    <property type="evidence" value="ECO:0000314"/>
    <property type="project" value="FlyBase"/>
</dbReference>
<dbReference type="GO" id="GO:0043035">
    <property type="term" value="F:chromatin insulator sequence binding"/>
    <property type="evidence" value="ECO:0000314"/>
    <property type="project" value="FlyBase"/>
</dbReference>
<dbReference type="GO" id="GO:0003677">
    <property type="term" value="F:DNA binding"/>
    <property type="evidence" value="ECO:0000314"/>
    <property type="project" value="FlyBase"/>
</dbReference>
<dbReference type="GO" id="GO:0042802">
    <property type="term" value="F:identical protein binding"/>
    <property type="evidence" value="ECO:0000353"/>
    <property type="project" value="IntAct"/>
</dbReference>
<dbReference type="GO" id="GO:0043565">
    <property type="term" value="F:sequence-specific DNA binding"/>
    <property type="evidence" value="ECO:0000314"/>
    <property type="project" value="FlyBase"/>
</dbReference>
<dbReference type="GO" id="GO:0008270">
    <property type="term" value="F:zinc ion binding"/>
    <property type="evidence" value="ECO:0007669"/>
    <property type="project" value="UniProtKB-KW"/>
</dbReference>
<dbReference type="GO" id="GO:0006325">
    <property type="term" value="P:chromatin organization"/>
    <property type="evidence" value="ECO:0007669"/>
    <property type="project" value="UniProtKB-KW"/>
</dbReference>
<dbReference type="GO" id="GO:0006355">
    <property type="term" value="P:regulation of DNA-templated transcription"/>
    <property type="evidence" value="ECO:0000314"/>
    <property type="project" value="FlyBase"/>
</dbReference>
<dbReference type="GO" id="GO:0006357">
    <property type="term" value="P:regulation of transcription by RNA polymerase II"/>
    <property type="evidence" value="ECO:0000318"/>
    <property type="project" value="GO_Central"/>
</dbReference>
<dbReference type="FunFam" id="3.30.160.60:FF:001843">
    <property type="entry name" value="Zinc finger 30C"/>
    <property type="match status" value="1"/>
</dbReference>
<dbReference type="FunFam" id="3.30.160.60:FF:000100">
    <property type="entry name" value="Zinc finger 45-like"/>
    <property type="match status" value="1"/>
</dbReference>
<dbReference type="FunFam" id="3.30.160.60:FF:000145">
    <property type="entry name" value="Zinc finger protein 574"/>
    <property type="match status" value="1"/>
</dbReference>
<dbReference type="Gene3D" id="3.30.160.60">
    <property type="entry name" value="Classic Zinc Finger"/>
    <property type="match status" value="5"/>
</dbReference>
<dbReference type="InterPro" id="IPR036236">
    <property type="entry name" value="Znf_C2H2_sf"/>
</dbReference>
<dbReference type="InterPro" id="IPR013087">
    <property type="entry name" value="Znf_C2H2_type"/>
</dbReference>
<dbReference type="PANTHER" id="PTHR24379:SF121">
    <property type="entry name" value="C2H2-TYPE DOMAIN-CONTAINING PROTEIN"/>
    <property type="match status" value="1"/>
</dbReference>
<dbReference type="PANTHER" id="PTHR24379">
    <property type="entry name" value="KRAB AND ZINC FINGER DOMAIN-CONTAINING"/>
    <property type="match status" value="1"/>
</dbReference>
<dbReference type="Pfam" id="PF00096">
    <property type="entry name" value="zf-C2H2"/>
    <property type="match status" value="3"/>
</dbReference>
<dbReference type="Pfam" id="PF13894">
    <property type="entry name" value="zf-C2H2_4"/>
    <property type="match status" value="1"/>
</dbReference>
<dbReference type="Pfam" id="PF13912">
    <property type="entry name" value="zf-C2H2_6"/>
    <property type="match status" value="1"/>
</dbReference>
<dbReference type="SMART" id="SM00355">
    <property type="entry name" value="ZnF_C2H2"/>
    <property type="match status" value="7"/>
</dbReference>
<dbReference type="SUPFAM" id="SSF57667">
    <property type="entry name" value="beta-beta-alpha zinc fingers"/>
    <property type="match status" value="3"/>
</dbReference>
<dbReference type="PROSITE" id="PS00028">
    <property type="entry name" value="ZINC_FINGER_C2H2_1"/>
    <property type="match status" value="5"/>
</dbReference>
<dbReference type="PROSITE" id="PS50157">
    <property type="entry name" value="ZINC_FINGER_C2H2_2"/>
    <property type="match status" value="5"/>
</dbReference>
<keyword id="KW-0156">Chromatin regulator</keyword>
<keyword id="KW-0158">Chromosome</keyword>
<keyword id="KW-0238">DNA-binding</keyword>
<keyword id="KW-0479">Metal-binding</keyword>
<keyword id="KW-0539">Nucleus</keyword>
<keyword id="KW-1185">Reference proteome</keyword>
<keyword id="KW-0677">Repeat</keyword>
<keyword id="KW-0804">Transcription</keyword>
<keyword id="KW-0805">Transcription regulation</keyword>
<keyword id="KW-0862">Zinc</keyword>
<keyword id="KW-0863">Zinc-finger</keyword>